<dbReference type="EMBL" id="AL833768">
    <property type="protein sequence ID" value="CAH56242.1"/>
    <property type="molecule type" value="mRNA"/>
</dbReference>
<dbReference type="EMBL" id="AC002525">
    <property type="status" value="NOT_ANNOTATED_CDS"/>
    <property type="molecule type" value="Genomic_DNA"/>
</dbReference>
<dbReference type="EMBL" id="CH471075">
    <property type="protein sequence ID" value="EAX08486.1"/>
    <property type="molecule type" value="Genomic_DNA"/>
</dbReference>
<dbReference type="SMR" id="Q658K8"/>
<dbReference type="IntAct" id="Q658K8">
    <property type="interactions" value="10"/>
</dbReference>
<dbReference type="GlyGen" id="Q658K8">
    <property type="glycosylation" value="1 site, 1 O-linked glycan (1 site)"/>
</dbReference>
<dbReference type="BioMuta" id="HGNC:30486"/>
<dbReference type="DMDM" id="121944392"/>
<dbReference type="jPOST" id="Q658K8"/>
<dbReference type="MassIVE" id="Q658K8"/>
<dbReference type="PeptideAtlas" id="Q658K8"/>
<dbReference type="ProteomicsDB" id="65921"/>
<dbReference type="AGR" id="HGNC:30486"/>
<dbReference type="GeneCards" id="EEF1DP3"/>
<dbReference type="HGNC" id="HGNC:30486">
    <property type="gene designation" value="EEF1DP3"/>
</dbReference>
<dbReference type="neXtProt" id="NX_Q658K8"/>
<dbReference type="InParanoid" id="Q658K8"/>
<dbReference type="PAN-GO" id="Q658K8">
    <property type="GO annotations" value="0 GO annotations based on evolutionary models"/>
</dbReference>
<dbReference type="PhylomeDB" id="Q658K8"/>
<dbReference type="PathwayCommons" id="Q658K8"/>
<dbReference type="ChiTaRS" id="EEF1DP3">
    <property type="organism name" value="human"/>
</dbReference>
<dbReference type="Pharos" id="Q658K8">
    <property type="development level" value="Tdark"/>
</dbReference>
<dbReference type="Proteomes" id="UP000005640">
    <property type="component" value="Unplaced"/>
</dbReference>
<dbReference type="RNAct" id="Q658K8">
    <property type="molecule type" value="protein"/>
</dbReference>
<dbReference type="GO" id="GO:0003746">
    <property type="term" value="F:translation elongation factor activity"/>
    <property type="evidence" value="ECO:0007669"/>
    <property type="project" value="UniProtKB-KW"/>
</dbReference>
<sequence length="133" mass="14137">MATNFLVGEKIWFHKFKYGDAERRFYEQMNGPVAGASLQEASMILHDIARARENIPKSLAGSLGPGASSGPSGDHSELVVRIASLEVDNQRDLAERAGEELARPLGHSPADPAHVSHAPSGAPGQEASHTSRG</sequence>
<protein>
    <recommendedName>
        <fullName>Putative elongation factor 1-delta-like protein</fullName>
        <shortName>Putative EF-1-delta-like pseudogene 3 protein</shortName>
    </recommendedName>
</protein>
<accession>Q658K8</accession>
<accession>Q08AR3</accession>
<feature type="chain" id="PRO_0000348254" description="Putative elongation factor 1-delta-like protein">
    <location>
        <begin position="1"/>
        <end position="133"/>
    </location>
</feature>
<feature type="region of interest" description="Disordered" evidence="1">
    <location>
        <begin position="58"/>
        <end position="77"/>
    </location>
</feature>
<feature type="region of interest" description="Disordered" evidence="1">
    <location>
        <begin position="89"/>
        <end position="133"/>
    </location>
</feature>
<feature type="compositionally biased region" description="Low complexity" evidence="1">
    <location>
        <begin position="58"/>
        <end position="73"/>
    </location>
</feature>
<feature type="compositionally biased region" description="Basic and acidic residues" evidence="1">
    <location>
        <begin position="89"/>
        <end position="102"/>
    </location>
</feature>
<gene>
    <name type="primary">EEF1DP3</name>
</gene>
<reference key="1">
    <citation type="journal article" date="2007" name="BMC Genomics">
        <title>The full-ORF clone resource of the German cDNA consortium.</title>
        <authorList>
            <person name="Bechtel S."/>
            <person name="Rosenfelder H."/>
            <person name="Duda A."/>
            <person name="Schmidt C.P."/>
            <person name="Ernst U."/>
            <person name="Wellenreuther R."/>
            <person name="Mehrle A."/>
            <person name="Schuster C."/>
            <person name="Bahr A."/>
            <person name="Bloecker H."/>
            <person name="Heubner D."/>
            <person name="Hoerlein A."/>
            <person name="Michel G."/>
            <person name="Wedler H."/>
            <person name="Koehrer K."/>
            <person name="Ottenwaelder B."/>
            <person name="Poustka A."/>
            <person name="Wiemann S."/>
            <person name="Schupp I."/>
        </authorList>
    </citation>
    <scope>NUCLEOTIDE SEQUENCE [LARGE SCALE MRNA]</scope>
    <source>
        <tissue>Stomach</tissue>
    </source>
</reference>
<reference key="2">
    <citation type="journal article" date="2004" name="Nature">
        <title>The DNA sequence and analysis of human chromosome 13.</title>
        <authorList>
            <person name="Dunham A."/>
            <person name="Matthews L.H."/>
            <person name="Burton J."/>
            <person name="Ashurst J.L."/>
            <person name="Howe K.L."/>
            <person name="Ashcroft K.J."/>
            <person name="Beare D.M."/>
            <person name="Burford D.C."/>
            <person name="Hunt S.E."/>
            <person name="Griffiths-Jones S."/>
            <person name="Jones M.C."/>
            <person name="Keenan S.J."/>
            <person name="Oliver K."/>
            <person name="Scott C.E."/>
            <person name="Ainscough R."/>
            <person name="Almeida J.P."/>
            <person name="Ambrose K.D."/>
            <person name="Andrews D.T."/>
            <person name="Ashwell R.I.S."/>
            <person name="Babbage A.K."/>
            <person name="Bagguley C.L."/>
            <person name="Bailey J."/>
            <person name="Bannerjee R."/>
            <person name="Barlow K.F."/>
            <person name="Bates K."/>
            <person name="Beasley H."/>
            <person name="Bird C.P."/>
            <person name="Bray-Allen S."/>
            <person name="Brown A.J."/>
            <person name="Brown J.Y."/>
            <person name="Burrill W."/>
            <person name="Carder C."/>
            <person name="Carter N.P."/>
            <person name="Chapman J.C."/>
            <person name="Clamp M.E."/>
            <person name="Clark S.Y."/>
            <person name="Clarke G."/>
            <person name="Clee C.M."/>
            <person name="Clegg S.C."/>
            <person name="Cobley V."/>
            <person name="Collins J.E."/>
            <person name="Corby N."/>
            <person name="Coville G.J."/>
            <person name="Deloukas P."/>
            <person name="Dhami P."/>
            <person name="Dunham I."/>
            <person name="Dunn M."/>
            <person name="Earthrowl M.E."/>
            <person name="Ellington A.G."/>
            <person name="Faulkner L."/>
            <person name="Frankish A.G."/>
            <person name="Frankland J."/>
            <person name="French L."/>
            <person name="Garner P."/>
            <person name="Garnett J."/>
            <person name="Gilbert J.G.R."/>
            <person name="Gilson C.J."/>
            <person name="Ghori J."/>
            <person name="Grafham D.V."/>
            <person name="Gribble S.M."/>
            <person name="Griffiths C."/>
            <person name="Hall R.E."/>
            <person name="Hammond S."/>
            <person name="Harley J.L."/>
            <person name="Hart E.A."/>
            <person name="Heath P.D."/>
            <person name="Howden P.J."/>
            <person name="Huckle E.J."/>
            <person name="Hunt P.J."/>
            <person name="Hunt A.R."/>
            <person name="Johnson C."/>
            <person name="Johnson D."/>
            <person name="Kay M."/>
            <person name="Kimberley A.M."/>
            <person name="King A."/>
            <person name="Laird G.K."/>
            <person name="Langford C.J."/>
            <person name="Lawlor S."/>
            <person name="Leongamornlert D.A."/>
            <person name="Lloyd D.M."/>
            <person name="Lloyd C."/>
            <person name="Loveland J.E."/>
            <person name="Lovell J."/>
            <person name="Martin S."/>
            <person name="Mashreghi-Mohammadi M."/>
            <person name="McLaren S.J."/>
            <person name="McMurray A."/>
            <person name="Milne S."/>
            <person name="Moore M.J.F."/>
            <person name="Nickerson T."/>
            <person name="Palmer S.A."/>
            <person name="Pearce A.V."/>
            <person name="Peck A.I."/>
            <person name="Pelan S."/>
            <person name="Phillimore B."/>
            <person name="Porter K.M."/>
            <person name="Rice C.M."/>
            <person name="Searle S."/>
            <person name="Sehra H.K."/>
            <person name="Shownkeen R."/>
            <person name="Skuce C.D."/>
            <person name="Smith M."/>
            <person name="Steward C.A."/>
            <person name="Sycamore N."/>
            <person name="Tester J."/>
            <person name="Thomas D.W."/>
            <person name="Tracey A."/>
            <person name="Tromans A."/>
            <person name="Tubby B."/>
            <person name="Wall M."/>
            <person name="Wallis J.M."/>
            <person name="West A.P."/>
            <person name="Whitehead S.L."/>
            <person name="Willey D.L."/>
            <person name="Wilming L."/>
            <person name="Wray P.W."/>
            <person name="Wright M.W."/>
            <person name="Young L."/>
            <person name="Coulson A."/>
            <person name="Durbin R.M."/>
            <person name="Hubbard T."/>
            <person name="Sulston J.E."/>
            <person name="Beck S."/>
            <person name="Bentley D.R."/>
            <person name="Rogers J."/>
            <person name="Ross M.T."/>
        </authorList>
    </citation>
    <scope>NUCLEOTIDE SEQUENCE [LARGE SCALE GENOMIC DNA]</scope>
</reference>
<reference key="3">
    <citation type="submission" date="2005-07" db="EMBL/GenBank/DDBJ databases">
        <authorList>
            <person name="Mural R.J."/>
            <person name="Istrail S."/>
            <person name="Sutton G.G."/>
            <person name="Florea L."/>
            <person name="Halpern A.L."/>
            <person name="Mobarry C.M."/>
            <person name="Lippert R."/>
            <person name="Walenz B."/>
            <person name="Shatkay H."/>
            <person name="Dew I."/>
            <person name="Miller J.R."/>
            <person name="Flanigan M.J."/>
            <person name="Edwards N.J."/>
            <person name="Bolanos R."/>
            <person name="Fasulo D."/>
            <person name="Halldorsson B.V."/>
            <person name="Hannenhalli S."/>
            <person name="Turner R."/>
            <person name="Yooseph S."/>
            <person name="Lu F."/>
            <person name="Nusskern D.R."/>
            <person name="Shue B.C."/>
            <person name="Zheng X.H."/>
            <person name="Zhong F."/>
            <person name="Delcher A.L."/>
            <person name="Huson D.H."/>
            <person name="Kravitz S.A."/>
            <person name="Mouchard L."/>
            <person name="Reinert K."/>
            <person name="Remington K.A."/>
            <person name="Clark A.G."/>
            <person name="Waterman M.S."/>
            <person name="Eichler E.E."/>
            <person name="Adams M.D."/>
            <person name="Hunkapiller M.W."/>
            <person name="Myers E.W."/>
            <person name="Venter J.C."/>
        </authorList>
    </citation>
    <scope>NUCLEOTIDE SEQUENCE [LARGE SCALE GENOMIC DNA]</scope>
</reference>
<proteinExistence type="uncertain"/>
<keyword id="KW-0251">Elongation factor</keyword>
<keyword id="KW-0648">Protein biosynthesis</keyword>
<keyword id="KW-1185">Reference proteome</keyword>
<comment type="interaction">
    <interactant intactId="EBI-10248874">
        <id>Q658K8</id>
    </interactant>
    <interactant intactId="EBI-491169">
        <id>P07550</id>
        <label>ADRB2</label>
    </interactant>
    <organismsDiffer>false</organismsDiffer>
    <experiments>3</experiments>
</comment>
<comment type="interaction">
    <interactant intactId="EBI-10248874">
        <id>Q658K8</id>
    </interactant>
    <interactant intactId="EBI-718729">
        <id>P55212</id>
        <label>CASP6</label>
    </interactant>
    <organismsDiffer>false</organismsDiffer>
    <experiments>3</experiments>
</comment>
<comment type="interaction">
    <interactant intactId="EBI-10248874">
        <id>Q658K8</id>
    </interactant>
    <interactant intactId="EBI-25837549">
        <id>P28329-3</id>
        <label>CHAT</label>
    </interactant>
    <organismsDiffer>false</organismsDiffer>
    <experiments>3</experiments>
</comment>
<comment type="interaction">
    <interactant intactId="EBI-10248874">
        <id>Q658K8</id>
    </interactant>
    <interactant intactId="EBI-10177695">
        <id>P26641-2</id>
        <label>EEF1G</label>
    </interactant>
    <organismsDiffer>false</organismsDiffer>
    <experiments>4</experiments>
</comment>
<comment type="interaction">
    <interactant intactId="EBI-10248874">
        <id>Q658K8</id>
    </interactant>
    <interactant intactId="EBI-348399">
        <id>P22607</id>
        <label>FGFR3</label>
    </interactant>
    <organismsDiffer>false</organismsDiffer>
    <experiments>3</experiments>
</comment>
<comment type="interaction">
    <interactant intactId="EBI-10248874">
        <id>Q658K8</id>
    </interactant>
    <interactant intactId="EBI-8285963">
        <id>Q14957</id>
        <label>GRIN2C</label>
    </interactant>
    <organismsDiffer>false</organismsDiffer>
    <experiments>3</experiments>
</comment>
<comment type="interaction">
    <interactant intactId="EBI-10248874">
        <id>Q658K8</id>
    </interactant>
    <interactant intactId="EBI-21591415">
        <id>P13473-2</id>
        <label>LAMP2</label>
    </interactant>
    <organismsDiffer>false</organismsDiffer>
    <experiments>3</experiments>
</comment>
<comment type="interaction">
    <interactant intactId="EBI-10248874">
        <id>Q658K8</id>
    </interactant>
    <interactant intactId="EBI-286642">
        <id>P62826</id>
        <label>RAN</label>
    </interactant>
    <organismsDiffer>false</organismsDiffer>
    <experiments>3</experiments>
</comment>
<comment type="interaction">
    <interactant intactId="EBI-10248874">
        <id>Q658K8</id>
    </interactant>
    <interactant intactId="EBI-741480">
        <id>Q9UMX0</id>
        <label>UBQLN1</label>
    </interactant>
    <organismsDiffer>false</organismsDiffer>
    <experiments>3</experiments>
</comment>
<comment type="interaction">
    <interactant intactId="EBI-10248874">
        <id>Q658K8</id>
    </interactant>
    <interactant intactId="EBI-25900580">
        <id>Q9Y649</id>
    </interactant>
    <organismsDiffer>false</organismsDiffer>
    <experiments>3</experiments>
</comment>
<comment type="similarity">
    <text evidence="2">Belongs to the EF-1-beta/EF-1-delta family.</text>
</comment>
<comment type="caution">
    <text evidence="2">Could be the product of a pseudogene.</text>
</comment>
<evidence type="ECO:0000256" key="1">
    <source>
        <dbReference type="SAM" id="MobiDB-lite"/>
    </source>
</evidence>
<evidence type="ECO:0000305" key="2"/>
<organism>
    <name type="scientific">Homo sapiens</name>
    <name type="common">Human</name>
    <dbReference type="NCBI Taxonomy" id="9606"/>
    <lineage>
        <taxon>Eukaryota</taxon>
        <taxon>Metazoa</taxon>
        <taxon>Chordata</taxon>
        <taxon>Craniata</taxon>
        <taxon>Vertebrata</taxon>
        <taxon>Euteleostomi</taxon>
        <taxon>Mammalia</taxon>
        <taxon>Eutheria</taxon>
        <taxon>Euarchontoglires</taxon>
        <taxon>Primates</taxon>
        <taxon>Haplorrhini</taxon>
        <taxon>Catarrhini</taxon>
        <taxon>Hominidae</taxon>
        <taxon>Homo</taxon>
    </lineage>
</organism>
<name>EF1DL_HUMAN</name>